<organism>
    <name type="scientific">Coxiella burnetii (strain Dugway 5J108-111)</name>
    <dbReference type="NCBI Taxonomy" id="434922"/>
    <lineage>
        <taxon>Bacteria</taxon>
        <taxon>Pseudomonadati</taxon>
        <taxon>Pseudomonadota</taxon>
        <taxon>Gammaproteobacteria</taxon>
        <taxon>Legionellales</taxon>
        <taxon>Coxiellaceae</taxon>
        <taxon>Coxiella</taxon>
    </lineage>
</organism>
<dbReference type="EC" id="2.7.7.6" evidence="1"/>
<dbReference type="EMBL" id="CP000733">
    <property type="protein sequence ID" value="ABS76842.1"/>
    <property type="molecule type" value="Genomic_DNA"/>
</dbReference>
<dbReference type="RefSeq" id="WP_005771496.1">
    <property type="nucleotide sequence ID" value="NC_009727.1"/>
</dbReference>
<dbReference type="SMR" id="A9KD06"/>
<dbReference type="KEGG" id="cbd:CBUD_1829"/>
<dbReference type="HOGENOM" id="CLU_053084_0_0_6"/>
<dbReference type="Proteomes" id="UP000008555">
    <property type="component" value="Chromosome"/>
</dbReference>
<dbReference type="GO" id="GO:0005737">
    <property type="term" value="C:cytoplasm"/>
    <property type="evidence" value="ECO:0007669"/>
    <property type="project" value="UniProtKB-ARBA"/>
</dbReference>
<dbReference type="GO" id="GO:0000428">
    <property type="term" value="C:DNA-directed RNA polymerase complex"/>
    <property type="evidence" value="ECO:0007669"/>
    <property type="project" value="UniProtKB-KW"/>
</dbReference>
<dbReference type="GO" id="GO:0003677">
    <property type="term" value="F:DNA binding"/>
    <property type="evidence" value="ECO:0007669"/>
    <property type="project" value="UniProtKB-UniRule"/>
</dbReference>
<dbReference type="GO" id="GO:0003899">
    <property type="term" value="F:DNA-directed RNA polymerase activity"/>
    <property type="evidence" value="ECO:0007669"/>
    <property type="project" value="UniProtKB-UniRule"/>
</dbReference>
<dbReference type="GO" id="GO:0046983">
    <property type="term" value="F:protein dimerization activity"/>
    <property type="evidence" value="ECO:0007669"/>
    <property type="project" value="InterPro"/>
</dbReference>
<dbReference type="GO" id="GO:0006351">
    <property type="term" value="P:DNA-templated transcription"/>
    <property type="evidence" value="ECO:0007669"/>
    <property type="project" value="UniProtKB-UniRule"/>
</dbReference>
<dbReference type="CDD" id="cd06928">
    <property type="entry name" value="RNAP_alpha_NTD"/>
    <property type="match status" value="1"/>
</dbReference>
<dbReference type="FunFam" id="1.10.150.20:FF:000001">
    <property type="entry name" value="DNA-directed RNA polymerase subunit alpha"/>
    <property type="match status" value="1"/>
</dbReference>
<dbReference type="FunFam" id="2.170.120.12:FF:000001">
    <property type="entry name" value="DNA-directed RNA polymerase subunit alpha"/>
    <property type="match status" value="1"/>
</dbReference>
<dbReference type="Gene3D" id="1.10.150.20">
    <property type="entry name" value="5' to 3' exonuclease, C-terminal subdomain"/>
    <property type="match status" value="1"/>
</dbReference>
<dbReference type="Gene3D" id="2.170.120.12">
    <property type="entry name" value="DNA-directed RNA polymerase, insert domain"/>
    <property type="match status" value="1"/>
</dbReference>
<dbReference type="Gene3D" id="3.30.1360.10">
    <property type="entry name" value="RNA polymerase, RBP11-like subunit"/>
    <property type="match status" value="1"/>
</dbReference>
<dbReference type="HAMAP" id="MF_00059">
    <property type="entry name" value="RNApol_bact_RpoA"/>
    <property type="match status" value="1"/>
</dbReference>
<dbReference type="InterPro" id="IPR011262">
    <property type="entry name" value="DNA-dir_RNA_pol_insert"/>
</dbReference>
<dbReference type="InterPro" id="IPR011263">
    <property type="entry name" value="DNA-dir_RNA_pol_RpoA/D/Rpb3"/>
</dbReference>
<dbReference type="InterPro" id="IPR011773">
    <property type="entry name" value="DNA-dir_RpoA"/>
</dbReference>
<dbReference type="InterPro" id="IPR036603">
    <property type="entry name" value="RBP11-like"/>
</dbReference>
<dbReference type="InterPro" id="IPR011260">
    <property type="entry name" value="RNAP_asu_C"/>
</dbReference>
<dbReference type="InterPro" id="IPR036643">
    <property type="entry name" value="RNApol_insert_sf"/>
</dbReference>
<dbReference type="NCBIfam" id="NF003513">
    <property type="entry name" value="PRK05182.1-2"/>
    <property type="match status" value="1"/>
</dbReference>
<dbReference type="NCBIfam" id="NF003519">
    <property type="entry name" value="PRK05182.2-5"/>
    <property type="match status" value="1"/>
</dbReference>
<dbReference type="NCBIfam" id="TIGR02027">
    <property type="entry name" value="rpoA"/>
    <property type="match status" value="1"/>
</dbReference>
<dbReference type="Pfam" id="PF01000">
    <property type="entry name" value="RNA_pol_A_bac"/>
    <property type="match status" value="1"/>
</dbReference>
<dbReference type="Pfam" id="PF03118">
    <property type="entry name" value="RNA_pol_A_CTD"/>
    <property type="match status" value="1"/>
</dbReference>
<dbReference type="Pfam" id="PF01193">
    <property type="entry name" value="RNA_pol_L"/>
    <property type="match status" value="1"/>
</dbReference>
<dbReference type="SMART" id="SM00662">
    <property type="entry name" value="RPOLD"/>
    <property type="match status" value="1"/>
</dbReference>
<dbReference type="SUPFAM" id="SSF47789">
    <property type="entry name" value="C-terminal domain of RNA polymerase alpha subunit"/>
    <property type="match status" value="1"/>
</dbReference>
<dbReference type="SUPFAM" id="SSF56553">
    <property type="entry name" value="Insert subdomain of RNA polymerase alpha subunit"/>
    <property type="match status" value="1"/>
</dbReference>
<dbReference type="SUPFAM" id="SSF55257">
    <property type="entry name" value="RBP11-like subunits of RNA polymerase"/>
    <property type="match status" value="1"/>
</dbReference>
<proteinExistence type="inferred from homology"/>
<evidence type="ECO:0000255" key="1">
    <source>
        <dbReference type="HAMAP-Rule" id="MF_00059"/>
    </source>
</evidence>
<protein>
    <recommendedName>
        <fullName evidence="1">DNA-directed RNA polymerase subunit alpha</fullName>
        <shortName evidence="1">RNAP subunit alpha</shortName>
        <ecNumber evidence="1">2.7.7.6</ecNumber>
    </recommendedName>
    <alternativeName>
        <fullName evidence="1">RNA polymerase subunit alpha</fullName>
    </alternativeName>
    <alternativeName>
        <fullName evidence="1">Transcriptase subunit alpha</fullName>
    </alternativeName>
</protein>
<comment type="function">
    <text evidence="1">DNA-dependent RNA polymerase catalyzes the transcription of DNA into RNA using the four ribonucleoside triphosphates as substrates.</text>
</comment>
<comment type="catalytic activity">
    <reaction evidence="1">
        <text>RNA(n) + a ribonucleoside 5'-triphosphate = RNA(n+1) + diphosphate</text>
        <dbReference type="Rhea" id="RHEA:21248"/>
        <dbReference type="Rhea" id="RHEA-COMP:14527"/>
        <dbReference type="Rhea" id="RHEA-COMP:17342"/>
        <dbReference type="ChEBI" id="CHEBI:33019"/>
        <dbReference type="ChEBI" id="CHEBI:61557"/>
        <dbReference type="ChEBI" id="CHEBI:140395"/>
        <dbReference type="EC" id="2.7.7.6"/>
    </reaction>
</comment>
<comment type="subunit">
    <text evidence="1">Homodimer. The RNAP catalytic core consists of 2 alpha, 1 beta, 1 beta' and 1 omega subunit. When a sigma factor is associated with the core the holoenzyme is formed, which can initiate transcription.</text>
</comment>
<comment type="domain">
    <text evidence="1">The N-terminal domain is essential for RNAP assembly and basal transcription, whereas the C-terminal domain is involved in interaction with transcriptional regulators and with upstream promoter elements.</text>
</comment>
<comment type="similarity">
    <text evidence="1">Belongs to the RNA polymerase alpha chain family.</text>
</comment>
<feature type="chain" id="PRO_1000075007" description="DNA-directed RNA polymerase subunit alpha">
    <location>
        <begin position="1"/>
        <end position="327"/>
    </location>
</feature>
<feature type="region of interest" description="Alpha N-terminal domain (alpha-NTD)" evidence="1">
    <location>
        <begin position="1"/>
        <end position="233"/>
    </location>
</feature>
<feature type="region of interest" description="Alpha C-terminal domain (alpha-CTD)" evidence="1">
    <location>
        <begin position="247"/>
        <end position="327"/>
    </location>
</feature>
<name>RPOA_COXBN</name>
<gene>
    <name evidence="1" type="primary">rpoA</name>
    <name type="ordered locus">CBUD_1829</name>
</gene>
<sequence length="327" mass="35556">MQNVLKSFLTPKNIQVQTISPCHFRILLEPLERGFGHTLGNALRRILLSSMPGAAIVQAEIDGVLHEYSSIEGVREDVVDVLLNLKGVAIKLEGREDAKLTLHKKGAGTVTAGDIQTESGVKIVNPDHVIAHITKDGEINMTLKAAMGRGYEPSSARSTGDQSRSVGLLLLDASYSPIRRVTYSVENARVEKRTDLDKLIIDLETDGTLDPEEAIRFAAAVLQHQLAAFVDLKQESDRDGGGKEGKVNPLLLRPVEDLELTVRAANCLKAESINYIGDLVQCTENDLLKTPNLGKKSLLEIKSVLAQKGLSLGMDLKGWPPADLTDQ</sequence>
<reference key="1">
    <citation type="journal article" date="2009" name="Infect. Immun.">
        <title>Comparative genomics reveal extensive transposon-mediated genomic plasticity and diversity among potential effector proteins within the genus Coxiella.</title>
        <authorList>
            <person name="Beare P.A."/>
            <person name="Unsworth N."/>
            <person name="Andoh M."/>
            <person name="Voth D.E."/>
            <person name="Omsland A."/>
            <person name="Gilk S.D."/>
            <person name="Williams K.P."/>
            <person name="Sobral B.W."/>
            <person name="Kupko J.J. III"/>
            <person name="Porcella S.F."/>
            <person name="Samuel J.E."/>
            <person name="Heinzen R.A."/>
        </authorList>
    </citation>
    <scope>NUCLEOTIDE SEQUENCE [LARGE SCALE GENOMIC DNA]</scope>
    <source>
        <strain>Dugway 5J108-111</strain>
    </source>
</reference>
<accession>A9KD06</accession>
<keyword id="KW-0240">DNA-directed RNA polymerase</keyword>
<keyword id="KW-0548">Nucleotidyltransferase</keyword>
<keyword id="KW-0804">Transcription</keyword>
<keyword id="KW-0808">Transferase</keyword>